<geneLocation type="mitochondrion"/>
<feature type="chain" id="PRO_0000183294" description="Cytochrome c oxidase subunit 1">
    <location>
        <begin position="1"/>
        <end position="514"/>
    </location>
</feature>
<feature type="topological domain" description="Mitochondrial matrix" evidence="5 7">
    <location>
        <begin position="1"/>
        <end position="11"/>
    </location>
</feature>
<feature type="transmembrane region" description="Helical; Name=I" evidence="7">
    <location>
        <begin position="12"/>
        <end position="40"/>
    </location>
</feature>
<feature type="topological domain" description="Mitochondrial intermembrane" evidence="7 10">
    <location>
        <begin position="41"/>
        <end position="50"/>
    </location>
</feature>
<feature type="transmembrane region" description="Helical; Name=II" evidence="7">
    <location>
        <begin position="51"/>
        <end position="86"/>
    </location>
</feature>
<feature type="topological domain" description="Mitochondrial matrix" evidence="5 7">
    <location>
        <begin position="87"/>
        <end position="94"/>
    </location>
</feature>
<feature type="transmembrane region" description="Helical; Name=III" evidence="7">
    <location>
        <begin position="95"/>
        <end position="117"/>
    </location>
</feature>
<feature type="topological domain" description="Mitochondrial intermembrane" evidence="5 7">
    <location>
        <begin position="118"/>
        <end position="140"/>
    </location>
</feature>
<feature type="transmembrane region" description="Helical; Name=IV" evidence="7">
    <location>
        <begin position="141"/>
        <end position="170"/>
    </location>
</feature>
<feature type="topological domain" description="Mitochondrial matrix" evidence="5 7">
    <location>
        <begin position="171"/>
        <end position="182"/>
    </location>
</feature>
<feature type="transmembrane region" description="Helical; Name=V" evidence="7">
    <location>
        <begin position="183"/>
        <end position="212"/>
    </location>
</feature>
<feature type="topological domain" description="Mitochondrial intermembrane" evidence="5 7">
    <location>
        <begin position="213"/>
        <end position="227"/>
    </location>
</feature>
<feature type="transmembrane region" description="Helical; Name=VI" evidence="7">
    <location>
        <begin position="228"/>
        <end position="261"/>
    </location>
</feature>
<feature type="topological domain" description="Mitochondrial matrix" evidence="5 7">
    <location>
        <begin position="262"/>
        <end position="269"/>
    </location>
</feature>
<feature type="transmembrane region" description="Helical; Name=VII" evidence="7">
    <location>
        <begin position="270"/>
        <end position="286"/>
    </location>
</feature>
<feature type="topological domain" description="Mitochondrial intermembrane" evidence="5 7">
    <location>
        <begin position="287"/>
        <end position="298"/>
    </location>
</feature>
<feature type="transmembrane region" description="Helical; Name=VIII" evidence="7">
    <location>
        <begin position="299"/>
        <end position="327"/>
    </location>
</feature>
<feature type="topological domain" description="Mitochondrial matrix" evidence="7">
    <location>
        <begin position="328"/>
        <end position="335"/>
    </location>
</feature>
<feature type="transmembrane region" description="Helical; Name=IX" evidence="7">
    <location>
        <begin position="336"/>
        <end position="357"/>
    </location>
</feature>
<feature type="topological domain" description="Mitochondrial intermembrane" evidence="7">
    <location>
        <begin position="358"/>
        <end position="370"/>
    </location>
</feature>
<feature type="transmembrane region" description="Helical; Name=X" evidence="7">
    <location>
        <begin position="371"/>
        <end position="400"/>
    </location>
</feature>
<feature type="topological domain" description="Mitochondrial matrix" evidence="5 7">
    <location>
        <begin position="401"/>
        <end position="406"/>
    </location>
</feature>
<feature type="transmembrane region" description="Helical; Name=XI" evidence="7">
    <location>
        <begin position="407"/>
        <end position="433"/>
    </location>
</feature>
<feature type="topological domain" description="Mitochondrial intermembrane" evidence="7">
    <location>
        <begin position="434"/>
        <end position="446"/>
    </location>
</feature>
<feature type="transmembrane region" description="Helical; Name=XII" evidence="7">
    <location>
        <begin position="447"/>
        <end position="478"/>
    </location>
</feature>
<feature type="topological domain" description="Mitochondrial matrix" evidence="5 7">
    <location>
        <begin position="479"/>
        <end position="514"/>
    </location>
</feature>
<feature type="binding site" evidence="7 12">
    <location>
        <position position="40"/>
    </location>
    <ligand>
        <name>Na(+)</name>
        <dbReference type="ChEBI" id="CHEBI:29101"/>
    </ligand>
</feature>
<feature type="binding site" evidence="7 12">
    <location>
        <position position="45"/>
    </location>
    <ligand>
        <name>Na(+)</name>
        <dbReference type="ChEBI" id="CHEBI:29101"/>
    </ligand>
</feature>
<feature type="binding site" description="axial binding residue" evidence="4 10">
    <location>
        <position position="61"/>
    </location>
    <ligand>
        <name>Fe(II)-heme a</name>
        <dbReference type="ChEBI" id="CHEBI:61715"/>
        <note>low-spin</note>
    </ligand>
    <ligandPart>
        <name>Fe</name>
        <dbReference type="ChEBI" id="CHEBI:18248"/>
    </ligandPart>
</feature>
<feature type="binding site" evidence="4 10">
    <location>
        <position position="240"/>
    </location>
    <ligand>
        <name>Cu cation</name>
        <dbReference type="ChEBI" id="CHEBI:23378"/>
        <label>B</label>
    </ligand>
</feature>
<feature type="binding site" evidence="11">
    <location>
        <position position="244"/>
    </location>
    <ligand>
        <name>O2</name>
        <dbReference type="ChEBI" id="CHEBI:15379"/>
    </ligand>
</feature>
<feature type="binding site" evidence="4 10">
    <location>
        <position position="290"/>
    </location>
    <ligand>
        <name>Cu cation</name>
        <dbReference type="ChEBI" id="CHEBI:23378"/>
        <label>B</label>
    </ligand>
</feature>
<feature type="binding site" evidence="4 10">
    <location>
        <position position="291"/>
    </location>
    <ligand>
        <name>Cu cation</name>
        <dbReference type="ChEBI" id="CHEBI:23378"/>
        <label>B</label>
    </ligand>
</feature>
<feature type="binding site" evidence="4 10">
    <location>
        <position position="368"/>
    </location>
    <ligand>
        <name>Mg(2+)</name>
        <dbReference type="ChEBI" id="CHEBI:18420"/>
        <note>ligand shared with MT-CO2</note>
    </ligand>
</feature>
<feature type="binding site" evidence="4 10">
    <location>
        <position position="369"/>
    </location>
    <ligand>
        <name>Mg(2+)</name>
        <dbReference type="ChEBI" id="CHEBI:18420"/>
        <note>ligand shared with MT-CO2</note>
    </ligand>
</feature>
<feature type="binding site" description="axial binding residue" evidence="4 10">
    <location>
        <position position="376"/>
    </location>
    <ligand>
        <name>heme a3</name>
        <dbReference type="ChEBI" id="CHEBI:83282"/>
        <note>high-spin</note>
    </ligand>
    <ligandPart>
        <name>Fe</name>
        <dbReference type="ChEBI" id="CHEBI:18248"/>
    </ligandPart>
</feature>
<feature type="binding site" description="axial binding residue" evidence="4 10">
    <location>
        <position position="378"/>
    </location>
    <ligand>
        <name>Fe(II)-heme a</name>
        <dbReference type="ChEBI" id="CHEBI:61715"/>
        <note>low-spin</note>
    </ligand>
    <ligandPart>
        <name>Fe</name>
        <dbReference type="ChEBI" id="CHEBI:18248"/>
    </ligandPart>
</feature>
<feature type="binding site" evidence="7 12">
    <location>
        <position position="441"/>
    </location>
    <ligand>
        <name>Na(+)</name>
        <dbReference type="ChEBI" id="CHEBI:29101"/>
    </ligand>
</feature>
<feature type="modified residue" description="N-formylmethionine" evidence="5">
    <location>
        <position position="1"/>
    </location>
</feature>
<feature type="cross-link" description="1'-histidyl-3'-tyrosine (His-Tyr)" evidence="3">
    <location>
        <begin position="240"/>
        <end position="244"/>
    </location>
</feature>
<feature type="helix" evidence="15">
    <location>
        <begin position="2"/>
        <end position="6"/>
    </location>
</feature>
<feature type="helix" evidence="15">
    <location>
        <begin position="12"/>
        <end position="40"/>
    </location>
</feature>
<feature type="strand" evidence="15">
    <location>
        <begin position="42"/>
        <end position="45"/>
    </location>
</feature>
<feature type="strand" evidence="16">
    <location>
        <begin position="47"/>
        <end position="49"/>
    </location>
</feature>
<feature type="helix" evidence="15">
    <location>
        <begin position="51"/>
        <end position="67"/>
    </location>
</feature>
<feature type="helix" evidence="15">
    <location>
        <begin position="70"/>
        <end position="74"/>
    </location>
</feature>
<feature type="turn" evidence="15">
    <location>
        <begin position="75"/>
        <end position="77"/>
    </location>
</feature>
<feature type="helix" evidence="15">
    <location>
        <begin position="78"/>
        <end position="86"/>
    </location>
</feature>
<feature type="helix" evidence="15">
    <location>
        <begin position="95"/>
        <end position="103"/>
    </location>
</feature>
<feature type="helix" evidence="15">
    <location>
        <begin position="105"/>
        <end position="117"/>
    </location>
</feature>
<feature type="turn" evidence="15">
    <location>
        <begin position="125"/>
        <end position="128"/>
    </location>
</feature>
<feature type="turn" evidence="15">
    <location>
        <begin position="130"/>
        <end position="133"/>
    </location>
</feature>
<feature type="turn" evidence="15">
    <location>
        <begin position="135"/>
        <end position="138"/>
    </location>
</feature>
<feature type="helix" evidence="15">
    <location>
        <begin position="142"/>
        <end position="170"/>
    </location>
</feature>
<feature type="helix" evidence="15">
    <location>
        <begin position="178"/>
        <end position="180"/>
    </location>
</feature>
<feature type="helix" evidence="15">
    <location>
        <begin position="183"/>
        <end position="214"/>
    </location>
</feature>
<feature type="helix" evidence="15">
    <location>
        <begin position="222"/>
        <end position="224"/>
    </location>
</feature>
<feature type="helix" evidence="15">
    <location>
        <begin position="228"/>
        <end position="261"/>
    </location>
</feature>
<feature type="helix" evidence="15">
    <location>
        <begin position="270"/>
        <end position="283"/>
    </location>
</feature>
<feature type="helix" evidence="15">
    <location>
        <begin position="288"/>
        <end position="291"/>
    </location>
</feature>
<feature type="helix" evidence="14">
    <location>
        <begin position="293"/>
        <end position="295"/>
    </location>
</feature>
<feature type="helix" evidence="15">
    <location>
        <begin position="299"/>
        <end position="311"/>
    </location>
</feature>
<feature type="helix" evidence="15">
    <location>
        <begin position="313"/>
        <end position="327"/>
    </location>
</feature>
<feature type="helix" evidence="15">
    <location>
        <begin position="336"/>
        <end position="358"/>
    </location>
</feature>
<feature type="helix" evidence="15">
    <location>
        <begin position="361"/>
        <end position="367"/>
    </location>
</feature>
<feature type="helix" evidence="15">
    <location>
        <begin position="371"/>
        <end position="381"/>
    </location>
</feature>
<feature type="turn" evidence="15">
    <location>
        <begin position="382"/>
        <end position="384"/>
    </location>
</feature>
<feature type="helix" evidence="15">
    <location>
        <begin position="385"/>
        <end position="401"/>
    </location>
</feature>
<feature type="helix" evidence="15">
    <location>
        <begin position="407"/>
        <end position="425"/>
    </location>
</feature>
<feature type="helix" evidence="15">
    <location>
        <begin position="428"/>
        <end position="433"/>
    </location>
</feature>
<feature type="strand" evidence="16">
    <location>
        <begin position="437"/>
        <end position="439"/>
    </location>
</feature>
<feature type="helix" evidence="15">
    <location>
        <begin position="445"/>
        <end position="447"/>
    </location>
</feature>
<feature type="helix" evidence="15">
    <location>
        <begin position="448"/>
        <end position="478"/>
    </location>
</feature>
<feature type="strand" evidence="18">
    <location>
        <begin position="481"/>
        <end position="484"/>
    </location>
</feature>
<feature type="helix" evidence="15">
    <location>
        <begin position="488"/>
        <end position="490"/>
    </location>
</feature>
<feature type="helix" evidence="15">
    <location>
        <begin position="492"/>
        <end position="494"/>
    </location>
</feature>
<feature type="strand" evidence="17">
    <location>
        <begin position="505"/>
        <end position="507"/>
    </location>
</feature>
<proteinExistence type="evidence at protein level"/>
<sequence>MFINRWLFSTNHKDIGTLYLLFGAWAGMVGTALSLLIRAELGQPGTLLGDDQIYNVVVTAHAFVMIFFMVMPIMIGGFGNWLVPLMIGAPDMAFPRMNNMSFWLLPPSFLLLLASSMVEAGAGTGWTVYPPLAGNLAHAGASVDLTIFSLHLAGVSSILGAINFITTIINMKPPAMSQYQTPLFVWSVMITAVLLLLSLPVLAAGITMLLTDRNLNTTFFDPAGGGDPILYQHLFWFFGHPEVYILILPGFGMISHIVTYYSGKKEPFGYMGMVWAMMSIGFLGFIVWAHHMFTVGMDVDTRAYFTSATMIIAIPTGVKVFSWLATLHGGNIKWSPAMMWALGFIFLFTVGGLTGIVLANSSLDIVLHDTYYVVAHFHYVLSMGAVFAIMGGFVHWFPLFSGYTLNDTWAKIHFAIMFVGVNMTFFPQHFLGLSGMPRRYSDYPDAYTMWNTISSMGSFISLTAVMLMVFIIWEAFASKREVLTVDLTTTNLEWLNGCPPPYHTFEEPTYVNLK</sequence>
<dbReference type="EC" id="7.1.1.9"/>
<dbReference type="EMBL" id="V00654">
    <property type="protein sequence ID" value="CAA23999.1"/>
    <property type="molecule type" value="Genomic_DNA"/>
</dbReference>
<dbReference type="EMBL" id="AF490528">
    <property type="protein sequence ID" value="AAM08330.1"/>
    <property type="molecule type" value="Genomic_DNA"/>
</dbReference>
<dbReference type="EMBL" id="AF490529">
    <property type="protein sequence ID" value="AAM08343.1"/>
    <property type="molecule type" value="Genomic_DNA"/>
</dbReference>
<dbReference type="EMBL" id="AF493541">
    <property type="protein sequence ID" value="AAM12791.1"/>
    <property type="molecule type" value="Genomic_DNA"/>
</dbReference>
<dbReference type="EMBL" id="AF493542">
    <property type="protein sequence ID" value="AAM12804.1"/>
    <property type="molecule type" value="Genomic_DNA"/>
</dbReference>
<dbReference type="PIR" id="A00464">
    <property type="entry name" value="ODBO1"/>
</dbReference>
<dbReference type="PDB" id="1OCC">
    <property type="method" value="X-ray"/>
    <property type="resolution" value="2.80 A"/>
    <property type="chains" value="A/N=1-514"/>
</dbReference>
<dbReference type="PDB" id="1OCO">
    <property type="method" value="X-ray"/>
    <property type="resolution" value="2.80 A"/>
    <property type="chains" value="A/N=1-514"/>
</dbReference>
<dbReference type="PDB" id="1OCR">
    <property type="method" value="X-ray"/>
    <property type="resolution" value="2.35 A"/>
    <property type="chains" value="A/N=1-514"/>
</dbReference>
<dbReference type="PDB" id="1OCZ">
    <property type="method" value="X-ray"/>
    <property type="resolution" value="2.90 A"/>
    <property type="chains" value="A/N=1-514"/>
</dbReference>
<dbReference type="PDB" id="1V54">
    <property type="method" value="X-ray"/>
    <property type="resolution" value="1.80 A"/>
    <property type="chains" value="A/N=1-514"/>
</dbReference>
<dbReference type="PDB" id="1V55">
    <property type="method" value="X-ray"/>
    <property type="resolution" value="1.90 A"/>
    <property type="chains" value="A/N=1-514"/>
</dbReference>
<dbReference type="PDB" id="2DYR">
    <property type="method" value="X-ray"/>
    <property type="resolution" value="1.80 A"/>
    <property type="chains" value="A/N=1-514"/>
</dbReference>
<dbReference type="PDB" id="2DYS">
    <property type="method" value="X-ray"/>
    <property type="resolution" value="2.20 A"/>
    <property type="chains" value="A/N=1-514"/>
</dbReference>
<dbReference type="PDB" id="2EIJ">
    <property type="method" value="X-ray"/>
    <property type="resolution" value="1.90 A"/>
    <property type="chains" value="A/N=1-514"/>
</dbReference>
<dbReference type="PDB" id="2EIK">
    <property type="method" value="X-ray"/>
    <property type="resolution" value="2.10 A"/>
    <property type="chains" value="A/N=1-514"/>
</dbReference>
<dbReference type="PDB" id="2EIL">
    <property type="method" value="X-ray"/>
    <property type="resolution" value="2.10 A"/>
    <property type="chains" value="A/N=1-514"/>
</dbReference>
<dbReference type="PDB" id="2EIM">
    <property type="method" value="X-ray"/>
    <property type="resolution" value="2.60 A"/>
    <property type="chains" value="A/N=1-514"/>
</dbReference>
<dbReference type="PDB" id="2EIN">
    <property type="method" value="X-ray"/>
    <property type="resolution" value="2.70 A"/>
    <property type="chains" value="A/N=1-514"/>
</dbReference>
<dbReference type="PDB" id="2OCC">
    <property type="method" value="X-ray"/>
    <property type="resolution" value="2.30 A"/>
    <property type="chains" value="A/N=1-514"/>
</dbReference>
<dbReference type="PDB" id="2Y69">
    <property type="method" value="X-ray"/>
    <property type="resolution" value="1.95 A"/>
    <property type="chains" value="A/N=1-514"/>
</dbReference>
<dbReference type="PDB" id="2YBB">
    <property type="method" value="EM"/>
    <property type="resolution" value="19.00 A"/>
    <property type="chains" value="L=1-514"/>
</dbReference>
<dbReference type="PDB" id="2ZXW">
    <property type="method" value="X-ray"/>
    <property type="resolution" value="2.50 A"/>
    <property type="chains" value="A/N=1-514"/>
</dbReference>
<dbReference type="PDB" id="3ABK">
    <property type="method" value="X-ray"/>
    <property type="resolution" value="2.00 A"/>
    <property type="chains" value="A/N=1-514"/>
</dbReference>
<dbReference type="PDB" id="3ABL">
    <property type="method" value="X-ray"/>
    <property type="resolution" value="2.10 A"/>
    <property type="chains" value="A/N=1-514"/>
</dbReference>
<dbReference type="PDB" id="3ABM">
    <property type="method" value="X-ray"/>
    <property type="resolution" value="1.95 A"/>
    <property type="chains" value="A/N=1-514"/>
</dbReference>
<dbReference type="PDB" id="3AG1">
    <property type="method" value="X-ray"/>
    <property type="resolution" value="2.20 A"/>
    <property type="chains" value="A/N=1-514"/>
</dbReference>
<dbReference type="PDB" id="3AG2">
    <property type="method" value="X-ray"/>
    <property type="resolution" value="1.80 A"/>
    <property type="chains" value="A/N=1-514"/>
</dbReference>
<dbReference type="PDB" id="3AG3">
    <property type="method" value="X-ray"/>
    <property type="resolution" value="1.80 A"/>
    <property type="chains" value="A/N=1-514"/>
</dbReference>
<dbReference type="PDB" id="3AG4">
    <property type="method" value="X-ray"/>
    <property type="resolution" value="2.05 A"/>
    <property type="chains" value="A/N=1-514"/>
</dbReference>
<dbReference type="PDB" id="3ASN">
    <property type="method" value="X-ray"/>
    <property type="resolution" value="3.00 A"/>
    <property type="chains" value="A/N=1-514"/>
</dbReference>
<dbReference type="PDB" id="3ASO">
    <property type="method" value="X-ray"/>
    <property type="resolution" value="2.30 A"/>
    <property type="chains" value="A/N=1-514"/>
</dbReference>
<dbReference type="PDB" id="3WG7">
    <property type="method" value="X-ray"/>
    <property type="resolution" value="1.90 A"/>
    <property type="chains" value="A/N=1-514"/>
</dbReference>
<dbReference type="PDB" id="3X2Q">
    <property type="method" value="X-ray"/>
    <property type="resolution" value="2.00 A"/>
    <property type="chains" value="A/N=1-514"/>
</dbReference>
<dbReference type="PDB" id="5B1A">
    <property type="method" value="X-ray"/>
    <property type="resolution" value="1.50 A"/>
    <property type="chains" value="A/N=1-514"/>
</dbReference>
<dbReference type="PDB" id="5B1B">
    <property type="method" value="X-ray"/>
    <property type="resolution" value="1.60 A"/>
    <property type="chains" value="A/N=1-514"/>
</dbReference>
<dbReference type="PDB" id="5B3S">
    <property type="method" value="X-ray"/>
    <property type="resolution" value="1.68 A"/>
    <property type="chains" value="A/N=2-514"/>
</dbReference>
<dbReference type="PDB" id="5GPN">
    <property type="method" value="EM"/>
    <property type="resolution" value="5.40 A"/>
    <property type="chains" value="y=1-514"/>
</dbReference>
<dbReference type="PDB" id="5IY5">
    <property type="method" value="X-ray"/>
    <property type="resolution" value="2.00 A"/>
    <property type="chains" value="A/N=1-514"/>
</dbReference>
<dbReference type="PDB" id="5LUF">
    <property type="method" value="EM"/>
    <property type="resolution" value="9.10 A"/>
    <property type="chains" value="x=1-514"/>
</dbReference>
<dbReference type="PDB" id="5W97">
    <property type="method" value="X-ray"/>
    <property type="resolution" value="2.30 A"/>
    <property type="chains" value="A/a=1-514"/>
</dbReference>
<dbReference type="PDB" id="5WAU">
    <property type="method" value="X-ray"/>
    <property type="resolution" value="1.95 A"/>
    <property type="chains" value="A/a=1-514"/>
</dbReference>
<dbReference type="PDB" id="5X19">
    <property type="method" value="X-ray"/>
    <property type="resolution" value="2.20 A"/>
    <property type="chains" value="A/N=1-514"/>
</dbReference>
<dbReference type="PDB" id="5X1B">
    <property type="method" value="X-ray"/>
    <property type="resolution" value="2.40 A"/>
    <property type="chains" value="A/N=1-514"/>
</dbReference>
<dbReference type="PDB" id="5X1F">
    <property type="method" value="X-ray"/>
    <property type="resolution" value="2.20 A"/>
    <property type="chains" value="A/N=1-514"/>
</dbReference>
<dbReference type="PDB" id="5XDQ">
    <property type="method" value="X-ray"/>
    <property type="resolution" value="1.77 A"/>
    <property type="chains" value="A/N=1-514"/>
</dbReference>
<dbReference type="PDB" id="5XDX">
    <property type="method" value="X-ray"/>
    <property type="resolution" value="1.99 A"/>
    <property type="chains" value="A/N=1-514"/>
</dbReference>
<dbReference type="PDB" id="5XTH">
    <property type="method" value="EM"/>
    <property type="resolution" value="3.90 A"/>
    <property type="chains" value="x=1-514"/>
</dbReference>
<dbReference type="PDB" id="5XTI">
    <property type="method" value="EM"/>
    <property type="resolution" value="17.40 A"/>
    <property type="chains" value="Bx/x=1-514"/>
</dbReference>
<dbReference type="PDB" id="5Z84">
    <property type="method" value="X-ray"/>
    <property type="resolution" value="1.85 A"/>
    <property type="chains" value="A/N=1-514"/>
</dbReference>
<dbReference type="PDB" id="5Z85">
    <property type="method" value="X-ray"/>
    <property type="resolution" value="1.85 A"/>
    <property type="chains" value="A/N=1-514"/>
</dbReference>
<dbReference type="PDB" id="5Z86">
    <property type="method" value="X-ray"/>
    <property type="resolution" value="1.85 A"/>
    <property type="chains" value="A/N=1-514"/>
</dbReference>
<dbReference type="PDB" id="5ZCO">
    <property type="method" value="X-ray"/>
    <property type="resolution" value="1.90 A"/>
    <property type="chains" value="A/N=1-514"/>
</dbReference>
<dbReference type="PDB" id="5ZCP">
    <property type="method" value="X-ray"/>
    <property type="resolution" value="1.65 A"/>
    <property type="chains" value="A/N=1-514"/>
</dbReference>
<dbReference type="PDB" id="5ZCQ">
    <property type="method" value="X-ray"/>
    <property type="resolution" value="1.65 A"/>
    <property type="chains" value="A/N=1-514"/>
</dbReference>
<dbReference type="PDB" id="6J8M">
    <property type="method" value="X-ray"/>
    <property type="resolution" value="1.90 A"/>
    <property type="chains" value="A/N=1-514"/>
</dbReference>
<dbReference type="PDB" id="6JUW">
    <property type="method" value="X-ray"/>
    <property type="resolution" value="1.80 A"/>
    <property type="chains" value="A/N=1-514"/>
</dbReference>
<dbReference type="PDB" id="6JY3">
    <property type="method" value="X-ray"/>
    <property type="resolution" value="1.85 A"/>
    <property type="chains" value="A=1-514"/>
</dbReference>
<dbReference type="PDB" id="6JY4">
    <property type="method" value="X-ray"/>
    <property type="resolution" value="1.95 A"/>
    <property type="chains" value="A=1-514"/>
</dbReference>
<dbReference type="PDB" id="6NKN">
    <property type="method" value="X-ray"/>
    <property type="resolution" value="2.50 A"/>
    <property type="chains" value="A/N=1-514"/>
</dbReference>
<dbReference type="PDB" id="6NMF">
    <property type="method" value="X-ray"/>
    <property type="resolution" value="2.80 A"/>
    <property type="chains" value="A/N=1-514"/>
</dbReference>
<dbReference type="PDB" id="6NMP">
    <property type="method" value="X-ray"/>
    <property type="resolution" value="2.90 A"/>
    <property type="chains" value="A/N=1-514"/>
</dbReference>
<dbReference type="PDB" id="7COH">
    <property type="method" value="X-ray"/>
    <property type="resolution" value="1.30 A"/>
    <property type="chains" value="A/N=1-514"/>
</dbReference>
<dbReference type="PDB" id="7CP5">
    <property type="method" value="X-ray"/>
    <property type="resolution" value="1.76 A"/>
    <property type="chains" value="A/N=1-514"/>
</dbReference>
<dbReference type="PDB" id="7D5W">
    <property type="method" value="X-ray"/>
    <property type="resolution" value="1.84 A"/>
    <property type="chains" value="A/N=1-514"/>
</dbReference>
<dbReference type="PDB" id="7D5X">
    <property type="method" value="X-ray"/>
    <property type="resolution" value="1.74 A"/>
    <property type="chains" value="A/N=1-514"/>
</dbReference>
<dbReference type="PDB" id="7DGQ">
    <property type="method" value="EM"/>
    <property type="resolution" value="5.00 A"/>
    <property type="chains" value="C3=1-514"/>
</dbReference>
<dbReference type="PDB" id="7DGR">
    <property type="method" value="EM"/>
    <property type="resolution" value="4.60 A"/>
    <property type="chains" value="A9=1-514"/>
</dbReference>
<dbReference type="PDB" id="7DGS">
    <property type="method" value="EM"/>
    <property type="resolution" value="7.80 A"/>
    <property type="chains" value="A9=1-514"/>
</dbReference>
<dbReference type="PDB" id="7DKF">
    <property type="method" value="EM"/>
    <property type="resolution" value="8.30 A"/>
    <property type="chains" value="A3=1-514"/>
</dbReference>
<dbReference type="PDB" id="7EV7">
    <property type="method" value="X-ray"/>
    <property type="resolution" value="1.70 A"/>
    <property type="chains" value="A/N=1-514"/>
</dbReference>
<dbReference type="PDB" id="7THU">
    <property type="method" value="X-ray"/>
    <property type="resolution" value="1.93 A"/>
    <property type="chains" value="AAA/NNN=1-514"/>
</dbReference>
<dbReference type="PDB" id="7TIE">
    <property type="method" value="X-ray"/>
    <property type="resolution" value="1.90 A"/>
    <property type="chains" value="AAA/NNN=1-514"/>
</dbReference>
<dbReference type="PDB" id="7TIH">
    <property type="method" value="X-ray"/>
    <property type="resolution" value="2.35 A"/>
    <property type="chains" value="AAA/NNN=1-514"/>
</dbReference>
<dbReference type="PDB" id="7TII">
    <property type="method" value="X-ray"/>
    <property type="resolution" value="2.45 A"/>
    <property type="chains" value="AAA/NNN=1-514"/>
</dbReference>
<dbReference type="PDB" id="7VUW">
    <property type="method" value="X-ray"/>
    <property type="resolution" value="1.60 A"/>
    <property type="chains" value="A/N=1-514"/>
</dbReference>
<dbReference type="PDB" id="7VVR">
    <property type="method" value="X-ray"/>
    <property type="resolution" value="1.65 A"/>
    <property type="chains" value="A/N=1-514"/>
</dbReference>
<dbReference type="PDB" id="7W3E">
    <property type="method" value="X-ray"/>
    <property type="resolution" value="1.45 A"/>
    <property type="chains" value="A/N=1-514"/>
</dbReference>
<dbReference type="PDB" id="7XMA">
    <property type="method" value="X-ray"/>
    <property type="resolution" value="2.20 A"/>
    <property type="chains" value="A/N=1-514"/>
</dbReference>
<dbReference type="PDB" id="7XMB">
    <property type="method" value="X-ray"/>
    <property type="resolution" value="2.20 A"/>
    <property type="chains" value="A/N=1-514"/>
</dbReference>
<dbReference type="PDB" id="7Y44">
    <property type="method" value="X-ray"/>
    <property type="resolution" value="1.90 A"/>
    <property type="chains" value="A/N=1-514"/>
</dbReference>
<dbReference type="PDB" id="7YPY">
    <property type="method" value="X-ray"/>
    <property type="resolution" value="1.50 A"/>
    <property type="chains" value="A/N=1-514"/>
</dbReference>
<dbReference type="PDB" id="8D4T">
    <property type="method" value="EM"/>
    <property type="resolution" value="3.10 A"/>
    <property type="chains" value="N=1-513"/>
</dbReference>
<dbReference type="PDB" id="8GBT">
    <property type="method" value="X-ray"/>
    <property type="resolution" value="2.80 A"/>
    <property type="chains" value="A/N=1-514"/>
</dbReference>
<dbReference type="PDB" id="8GCQ">
    <property type="method" value="X-ray"/>
    <property type="resolution" value="2.38 A"/>
    <property type="chains" value="A/N=1-514"/>
</dbReference>
<dbReference type="PDB" id="8GVM">
    <property type="method" value="X-ray"/>
    <property type="resolution" value="1.85 A"/>
    <property type="chains" value="A/N=1-514"/>
</dbReference>
<dbReference type="PDB" id="8H8R">
    <property type="method" value="X-ray"/>
    <property type="resolution" value="1.70 A"/>
    <property type="chains" value="A/N=1-514"/>
</dbReference>
<dbReference type="PDB" id="8H8S">
    <property type="method" value="X-ray"/>
    <property type="resolution" value="1.70 A"/>
    <property type="chains" value="A/N=1-514"/>
</dbReference>
<dbReference type="PDB" id="8IJN">
    <property type="method" value="X-ray"/>
    <property type="resolution" value="1.80 A"/>
    <property type="chains" value="A/N=1-514"/>
</dbReference>
<dbReference type="PDBsum" id="1OCC"/>
<dbReference type="PDBsum" id="1OCO"/>
<dbReference type="PDBsum" id="1OCR"/>
<dbReference type="PDBsum" id="1OCZ"/>
<dbReference type="PDBsum" id="1V54"/>
<dbReference type="PDBsum" id="1V55"/>
<dbReference type="PDBsum" id="2DYR"/>
<dbReference type="PDBsum" id="2DYS"/>
<dbReference type="PDBsum" id="2EIJ"/>
<dbReference type="PDBsum" id="2EIK"/>
<dbReference type="PDBsum" id="2EIL"/>
<dbReference type="PDBsum" id="2EIM"/>
<dbReference type="PDBsum" id="2EIN"/>
<dbReference type="PDBsum" id="2OCC"/>
<dbReference type="PDBsum" id="2Y69"/>
<dbReference type="PDBsum" id="2YBB"/>
<dbReference type="PDBsum" id="2ZXW"/>
<dbReference type="PDBsum" id="3ABK"/>
<dbReference type="PDBsum" id="3ABL"/>
<dbReference type="PDBsum" id="3ABM"/>
<dbReference type="PDBsum" id="3AG1"/>
<dbReference type="PDBsum" id="3AG2"/>
<dbReference type="PDBsum" id="3AG3"/>
<dbReference type="PDBsum" id="3AG4"/>
<dbReference type="PDBsum" id="3ASN"/>
<dbReference type="PDBsum" id="3ASO"/>
<dbReference type="PDBsum" id="3WG7"/>
<dbReference type="PDBsum" id="3X2Q"/>
<dbReference type="PDBsum" id="5B1A"/>
<dbReference type="PDBsum" id="5B1B"/>
<dbReference type="PDBsum" id="5B3S"/>
<dbReference type="PDBsum" id="5GPN"/>
<dbReference type="PDBsum" id="5IY5"/>
<dbReference type="PDBsum" id="5LUF"/>
<dbReference type="PDBsum" id="5W97"/>
<dbReference type="PDBsum" id="5WAU"/>
<dbReference type="PDBsum" id="5X19"/>
<dbReference type="PDBsum" id="5X1B"/>
<dbReference type="PDBsum" id="5X1F"/>
<dbReference type="PDBsum" id="5XDQ"/>
<dbReference type="PDBsum" id="5XDX"/>
<dbReference type="PDBsum" id="5XTH"/>
<dbReference type="PDBsum" id="5XTI"/>
<dbReference type="PDBsum" id="5Z84"/>
<dbReference type="PDBsum" id="5Z85"/>
<dbReference type="PDBsum" id="5Z86"/>
<dbReference type="PDBsum" id="5ZCO"/>
<dbReference type="PDBsum" id="5ZCP"/>
<dbReference type="PDBsum" id="5ZCQ"/>
<dbReference type="PDBsum" id="6J8M"/>
<dbReference type="PDBsum" id="6JUW"/>
<dbReference type="PDBsum" id="6JY3"/>
<dbReference type="PDBsum" id="6JY4"/>
<dbReference type="PDBsum" id="6NKN"/>
<dbReference type="PDBsum" id="6NMF"/>
<dbReference type="PDBsum" id="6NMP"/>
<dbReference type="PDBsum" id="7COH"/>
<dbReference type="PDBsum" id="7CP5"/>
<dbReference type="PDBsum" id="7D5W"/>
<dbReference type="PDBsum" id="7D5X"/>
<dbReference type="PDBsum" id="7DGQ"/>
<dbReference type="PDBsum" id="7DGR"/>
<dbReference type="PDBsum" id="7DGS"/>
<dbReference type="PDBsum" id="7DKF"/>
<dbReference type="PDBsum" id="7EV7"/>
<dbReference type="PDBsum" id="7THU"/>
<dbReference type="PDBsum" id="7TIE"/>
<dbReference type="PDBsum" id="7TIH"/>
<dbReference type="PDBsum" id="7TII"/>
<dbReference type="PDBsum" id="7VUW"/>
<dbReference type="PDBsum" id="7VVR"/>
<dbReference type="PDBsum" id="7W3E"/>
<dbReference type="PDBsum" id="7XMA"/>
<dbReference type="PDBsum" id="7XMB"/>
<dbReference type="PDBsum" id="7Y44"/>
<dbReference type="PDBsum" id="7YPY"/>
<dbReference type="PDBsum" id="8D4T"/>
<dbReference type="PDBsum" id="8GBT"/>
<dbReference type="PDBsum" id="8GCQ"/>
<dbReference type="PDBsum" id="8GVM"/>
<dbReference type="PDBsum" id="8H8R"/>
<dbReference type="PDBsum" id="8H8S"/>
<dbReference type="PDBsum" id="8IJN"/>
<dbReference type="EMDB" id="EMD-1876"/>
<dbReference type="EMDB" id="EMD-27196"/>
<dbReference type="EMDB" id="EMD-30673"/>
<dbReference type="EMDB" id="EMD-30674"/>
<dbReference type="EMDB" id="EMD-30675"/>
<dbReference type="EMDB" id="EMD-30706"/>
<dbReference type="EMDB" id="EMD-4107"/>
<dbReference type="EMDB" id="EMD-9534"/>
<dbReference type="SMR" id="P00396"/>
<dbReference type="CORUM" id="P00396"/>
<dbReference type="DIP" id="DIP-60937N"/>
<dbReference type="FunCoup" id="P00396">
    <property type="interactions" value="170"/>
</dbReference>
<dbReference type="IntAct" id="P00396">
    <property type="interactions" value="13"/>
</dbReference>
<dbReference type="MINT" id="P00396"/>
<dbReference type="STRING" id="9913.ENSBTAP00000053147"/>
<dbReference type="TCDB" id="3.D.4.7.1">
    <property type="family name" value="the proton-translocating cytochrome oxidase (cox) superfamily"/>
</dbReference>
<dbReference type="iPTMnet" id="P00396"/>
<dbReference type="PaxDb" id="9913-ENSBTAP00000053147"/>
<dbReference type="eggNOG" id="KOG4769">
    <property type="taxonomic scope" value="Eukaryota"/>
</dbReference>
<dbReference type="InParanoid" id="P00396"/>
<dbReference type="BRENDA" id="7.1.1.9">
    <property type="organism ID" value="908"/>
</dbReference>
<dbReference type="SABIO-RK" id="P00396"/>
<dbReference type="UniPathway" id="UPA00705"/>
<dbReference type="EvolutionaryTrace" id="P00396"/>
<dbReference type="Proteomes" id="UP000009136">
    <property type="component" value="Mitochondrion MT"/>
</dbReference>
<dbReference type="Proteomes" id="UP000009136">
    <property type="component" value="Unassembled WGS sequence"/>
</dbReference>
<dbReference type="GO" id="GO:0005743">
    <property type="term" value="C:mitochondrial inner membrane"/>
    <property type="evidence" value="ECO:0007669"/>
    <property type="project" value="UniProtKB-SubCell"/>
</dbReference>
<dbReference type="GO" id="GO:0045277">
    <property type="term" value="C:respiratory chain complex IV"/>
    <property type="evidence" value="ECO:0000314"/>
    <property type="project" value="UniProtKB"/>
</dbReference>
<dbReference type="GO" id="GO:0004129">
    <property type="term" value="F:cytochrome-c oxidase activity"/>
    <property type="evidence" value="ECO:0007669"/>
    <property type="project" value="UniProtKB-EC"/>
</dbReference>
<dbReference type="GO" id="GO:0020037">
    <property type="term" value="F:heme binding"/>
    <property type="evidence" value="ECO:0007669"/>
    <property type="project" value="InterPro"/>
</dbReference>
<dbReference type="GO" id="GO:0046872">
    <property type="term" value="F:metal ion binding"/>
    <property type="evidence" value="ECO:0007669"/>
    <property type="project" value="UniProtKB-KW"/>
</dbReference>
<dbReference type="GO" id="GO:0009060">
    <property type="term" value="P:aerobic respiration"/>
    <property type="evidence" value="ECO:0000318"/>
    <property type="project" value="GO_Central"/>
</dbReference>
<dbReference type="GO" id="GO:0006119">
    <property type="term" value="P:oxidative phosphorylation"/>
    <property type="evidence" value="ECO:0007669"/>
    <property type="project" value="UniProtKB-UniPathway"/>
</dbReference>
<dbReference type="GO" id="GO:0022904">
    <property type="term" value="P:respiratory electron transport chain"/>
    <property type="evidence" value="ECO:0000318"/>
    <property type="project" value="GO_Central"/>
</dbReference>
<dbReference type="CDD" id="cd01663">
    <property type="entry name" value="Cyt_c_Oxidase_I"/>
    <property type="match status" value="1"/>
</dbReference>
<dbReference type="FunFam" id="1.20.210.10:FF:000001">
    <property type="entry name" value="Cytochrome c oxidase subunit 1"/>
    <property type="match status" value="1"/>
</dbReference>
<dbReference type="Gene3D" id="1.20.210.10">
    <property type="entry name" value="Cytochrome c oxidase-like, subunit I domain"/>
    <property type="match status" value="1"/>
</dbReference>
<dbReference type="InterPro" id="IPR023616">
    <property type="entry name" value="Cyt_c_oxase-like_su1_dom"/>
</dbReference>
<dbReference type="InterPro" id="IPR036927">
    <property type="entry name" value="Cyt_c_oxase-like_su1_sf"/>
</dbReference>
<dbReference type="InterPro" id="IPR000883">
    <property type="entry name" value="Cyt_C_Oxase_1"/>
</dbReference>
<dbReference type="InterPro" id="IPR023615">
    <property type="entry name" value="Cyt_c_Oxase_su1_BS"/>
</dbReference>
<dbReference type="InterPro" id="IPR033944">
    <property type="entry name" value="Cyt_c_oxase_su1_dom"/>
</dbReference>
<dbReference type="PANTHER" id="PTHR10422">
    <property type="entry name" value="CYTOCHROME C OXIDASE SUBUNIT 1"/>
    <property type="match status" value="1"/>
</dbReference>
<dbReference type="PANTHER" id="PTHR10422:SF18">
    <property type="entry name" value="CYTOCHROME C OXIDASE SUBUNIT 1"/>
    <property type="match status" value="1"/>
</dbReference>
<dbReference type="Pfam" id="PF00115">
    <property type="entry name" value="COX1"/>
    <property type="match status" value="1"/>
</dbReference>
<dbReference type="PRINTS" id="PR01165">
    <property type="entry name" value="CYCOXIDASEI"/>
</dbReference>
<dbReference type="SUPFAM" id="SSF81442">
    <property type="entry name" value="Cytochrome c oxidase subunit I-like"/>
    <property type="match status" value="1"/>
</dbReference>
<dbReference type="PROSITE" id="PS50855">
    <property type="entry name" value="COX1"/>
    <property type="match status" value="1"/>
</dbReference>
<dbReference type="PROSITE" id="PS00077">
    <property type="entry name" value="COX1_CUB"/>
    <property type="match status" value="1"/>
</dbReference>
<gene>
    <name type="primary">MT-CO1</name>
    <name type="synonym">COI</name>
    <name type="synonym">COXI</name>
    <name type="synonym">MTCO1</name>
</gene>
<evidence type="ECO:0000250" key="1">
    <source>
        <dbReference type="UniProtKB" id="P00395"/>
    </source>
</evidence>
<evidence type="ECO:0000250" key="2">
    <source>
        <dbReference type="UniProtKB" id="P00401"/>
    </source>
</evidence>
<evidence type="ECO:0000269" key="3">
    <source>
    </source>
</evidence>
<evidence type="ECO:0000269" key="4">
    <source>
    </source>
</evidence>
<evidence type="ECO:0000269" key="5">
    <source>
    </source>
</evidence>
<evidence type="ECO:0000269" key="6">
    <source>
    </source>
</evidence>
<evidence type="ECO:0000269" key="7">
    <source>
    </source>
</evidence>
<evidence type="ECO:0000269" key="8">
    <source>
    </source>
</evidence>
<evidence type="ECO:0000269" key="9">
    <source>
    </source>
</evidence>
<evidence type="ECO:0000269" key="10">
    <source>
    </source>
</evidence>
<evidence type="ECO:0000305" key="11"/>
<evidence type="ECO:0000305" key="12">
    <source>
    </source>
</evidence>
<evidence type="ECO:0000312" key="13">
    <source>
        <dbReference type="Proteomes" id="UP000009136"/>
    </source>
</evidence>
<evidence type="ECO:0007829" key="14">
    <source>
        <dbReference type="PDB" id="2EIM"/>
    </source>
</evidence>
<evidence type="ECO:0007829" key="15">
    <source>
        <dbReference type="PDB" id="7COH"/>
    </source>
</evidence>
<evidence type="ECO:0007829" key="16">
    <source>
        <dbReference type="PDB" id="7W3E"/>
    </source>
</evidence>
<evidence type="ECO:0007829" key="17">
    <source>
        <dbReference type="PDB" id="8GCQ"/>
    </source>
</evidence>
<evidence type="ECO:0007829" key="18">
    <source>
        <dbReference type="PDB" id="8H8R"/>
    </source>
</evidence>
<keyword id="KW-0002">3D-structure</keyword>
<keyword id="KW-0106">Calcium</keyword>
<keyword id="KW-0186">Copper</keyword>
<keyword id="KW-0903">Direct protein sequencing</keyword>
<keyword id="KW-0249">Electron transport</keyword>
<keyword id="KW-0291">Formylation</keyword>
<keyword id="KW-0349">Heme</keyword>
<keyword id="KW-0408">Iron</keyword>
<keyword id="KW-0460">Magnesium</keyword>
<keyword id="KW-0472">Membrane</keyword>
<keyword id="KW-0479">Metal-binding</keyword>
<keyword id="KW-0496">Mitochondrion</keyword>
<keyword id="KW-0999">Mitochondrion inner membrane</keyword>
<keyword id="KW-1185">Reference proteome</keyword>
<keyword id="KW-0679">Respiratory chain</keyword>
<keyword id="KW-0915">Sodium</keyword>
<keyword id="KW-1278">Translocase</keyword>
<keyword id="KW-0812">Transmembrane</keyword>
<keyword id="KW-1133">Transmembrane helix</keyword>
<keyword id="KW-0813">Transport</keyword>
<organism>
    <name type="scientific">Bos taurus</name>
    <name type="common">Bovine</name>
    <dbReference type="NCBI Taxonomy" id="9913"/>
    <lineage>
        <taxon>Eukaryota</taxon>
        <taxon>Metazoa</taxon>
        <taxon>Chordata</taxon>
        <taxon>Craniata</taxon>
        <taxon>Vertebrata</taxon>
        <taxon>Euteleostomi</taxon>
        <taxon>Mammalia</taxon>
        <taxon>Eutheria</taxon>
        <taxon>Laurasiatheria</taxon>
        <taxon>Artiodactyla</taxon>
        <taxon>Ruminantia</taxon>
        <taxon>Pecora</taxon>
        <taxon>Bovidae</taxon>
        <taxon>Bovinae</taxon>
        <taxon>Bos</taxon>
    </lineage>
</organism>
<accession>P00396</accession>
<comment type="function">
    <text evidence="2">Component of the cytochrome c oxidase, the last enzyme in the mitochondrial electron transport chain which drives oxidative phosphorylation. The respiratory chain contains 3 multisubunit complexes succinate dehydrogenase (complex II, CII), ubiquinol-cytochrome c oxidoreductase (cytochrome b-c1 complex, complex III, CIII) and cytochrome c oxidase (complex IV, CIV), that cooperate to transfer electrons derived from NADH and succinate to molecular oxygen, creating an electrochemical gradient over the inner membrane that drives transmembrane transport and the ATP synthase. Cytochrome c oxidase is the component of the respiratory chain that catalyzes the reduction of oxygen to water. Electrons originating from reduced cytochrome c in the intermembrane space (IMS) are transferred via the dinuclear copper A center (CU(A)) of subunit 2 and heme A of subunit 1 to the active site in subunit 1, a binuclear center (BNC) formed by heme A3 and copper B (CU(B)). The BNC reduces molecular oxygen to 2 water molecules using 4 electrons from cytochrome c in the IMS and 4 protons from the mitochondrial matrix.</text>
</comment>
<comment type="catalytic activity">
    <reaction evidence="2">
        <text>4 Fe(II)-[cytochrome c] + O2 + 8 H(+)(in) = 4 Fe(III)-[cytochrome c] + 2 H2O + 4 H(+)(out)</text>
        <dbReference type="Rhea" id="RHEA:11436"/>
        <dbReference type="Rhea" id="RHEA-COMP:10350"/>
        <dbReference type="Rhea" id="RHEA-COMP:14399"/>
        <dbReference type="ChEBI" id="CHEBI:15377"/>
        <dbReference type="ChEBI" id="CHEBI:15378"/>
        <dbReference type="ChEBI" id="CHEBI:15379"/>
        <dbReference type="ChEBI" id="CHEBI:29033"/>
        <dbReference type="ChEBI" id="CHEBI:29034"/>
        <dbReference type="EC" id="7.1.1.9"/>
    </reaction>
    <physiologicalReaction direction="left-to-right" evidence="2">
        <dbReference type="Rhea" id="RHEA:11437"/>
    </physiologicalReaction>
</comment>
<comment type="cofactor">
    <cofactor evidence="4 5 10">
        <name>heme</name>
        <dbReference type="ChEBI" id="CHEBI:30413"/>
    </cofactor>
    <text evidence="4 5 10">Binds 2 heme A groups non-covalently per subunit.</text>
</comment>
<comment type="cofactor">
    <cofactor evidence="4 5 10">
        <name>Cu cation</name>
        <dbReference type="ChEBI" id="CHEBI:23378"/>
    </cofactor>
    <text evidence="4 5 10">Binds a copper B center.</text>
</comment>
<comment type="pathway">
    <text evidence="2">Energy metabolism; oxidative phosphorylation.</text>
</comment>
<comment type="subunit">
    <text evidence="1 6 8 10">Component of the cytochrome c oxidase (complex IV, CIV), a multisubunit enzyme composed of 14 subunits. The complex is composed of a catalytic core of 3 subunits MT-CO1, MT-CO2 and MT-CO3, encoded in the mitochondrial DNA, and 11 supernumerary subunits COX4I1 (or COX4I2), COX5A, COX5B, COX6A2 (or COX6A1), COX6B1 (or COX6B2), COX6C, COX7A1 (or COX7A2), COX7B, COX7C, COX8B and NDUFA4, which are encoded in the nuclear genome (PubMed:8638158). The complex exists as a monomer or a dimer and forms supercomplexes (SCs) in the inner mitochondrial membrane with NADH-ubiquinone oxidoreductase (complex I, CI) and ubiquinol-cytochrome c oxidoreductase (cytochrome b-c1 complex, complex III, CIII), resulting in different assemblies (supercomplex SCI(1)III(2)IV(1) and megacomplex MCI(2)III(2)IV(2)) (PubMed:26698328, PubMed:27830641). As a newly synthesized protein, rapidly incorporates into a multi-subunit assembly intermediate in the inner membrane, called MITRAC (mitochondrial translation regulation assembly intermediate of cytochrome c oxidase) complex, whose core components are COA3/MITRAC12 and COX14. Within the MITRAC complex, interacts with COA3 and with SMIM20/MITRAC7; the interaction with SMIM20 stabilizes the newly synthesized MT-CO1 and prevents its premature turnover. Interacts with TMEM177 in a COX20-dependent manner (By similarity).</text>
</comment>
<comment type="subcellular location">
    <subcellularLocation>
        <location evidence="7 9">Mitochondrion inner membrane</location>
        <topology evidence="7 9">Multi-pass membrane protein</topology>
    </subcellularLocation>
</comment>
<comment type="PTM">
    <text>His-240 and Tyr-244 are involved in the formation of a copper-coordinated covalent cross-link at the active site of the catalytic subunit I.</text>
</comment>
<comment type="similarity">
    <text evidence="11">Belongs to the heme-copper respiratory oxidase family.</text>
</comment>
<protein>
    <recommendedName>
        <fullName>Cytochrome c oxidase subunit 1</fullName>
        <ecNumber>7.1.1.9</ecNumber>
    </recommendedName>
    <alternativeName>
        <fullName>Cytochrome c oxidase polypeptide I</fullName>
    </alternativeName>
</protein>
<reference key="1">
    <citation type="journal article" date="1982" name="J. Mol. Biol.">
        <title>Complete sequence of bovine mitochondrial DNA. Conserved features of the mammalian mitochondrial genome.</title>
        <authorList>
            <person name="Anderson S."/>
            <person name="de Bruijn M.H.L."/>
            <person name="Coulson A.R."/>
            <person name="Eperon I.C."/>
            <person name="Sanger F."/>
            <person name="Young I.G."/>
        </authorList>
    </citation>
    <scope>NUCLEOTIDE SEQUENCE [GENOMIC DNA]</scope>
    <source>
        <strain evidence="13">Hereford</strain>
        <tissue>Heart</tissue>
    </source>
</reference>
<reference key="2">
    <citation type="journal article" date="1990" name="Biol. Chem. Hoppe-Seyler">
        <title>Studies on cytochrome-c oxidase, XIV. The amino-acid sequence of subunit I -- proteinchemical methods for the analysis of a large hydrophobic membrane protein.</title>
        <authorList>
            <person name="Hensel S."/>
            <person name="Buse G."/>
        </authorList>
    </citation>
    <scope>PROTEIN SEQUENCE</scope>
    <scope>FORMYLATION AT MET-1</scope>
    <source>
        <tissue>Heart</tissue>
    </source>
</reference>
<reference key="3">
    <citation type="submission" date="2002-03" db="EMBL/GenBank/DDBJ databases">
        <title>Bos taurus mitochondrial protein coding regions.</title>
        <authorList>
            <person name="Wettstein P.J."/>
        </authorList>
    </citation>
    <scope>NUCLEOTIDE SEQUENCE [GENOMIC DNA]</scope>
    <source>
        <strain>65</strain>
        <strain>66</strain>
        <strain>D</strain>
        <strain>F</strain>
    </source>
</reference>
<reference key="4">
    <citation type="journal article" date="1999" name="Protein Sci.">
        <title>Evidence for a copper-coordinated histidine-tyrosine cross-link in the active site of cytochrome oxidase.</title>
        <authorList>
            <person name="Buse G."/>
            <person name="Soulimane T."/>
            <person name="Dewor M."/>
            <person name="Meyer H.E."/>
            <person name="Blueggel M."/>
        </authorList>
    </citation>
    <scope>COVALENT BOND</scope>
</reference>
<reference key="5">
    <citation type="journal article" date="2016" name="J. Biol. Chem.">
        <title>Purification of active respiratory supercomplex from bovine heart mitochondria enables functional studies.</title>
        <authorList>
            <person name="Shinzawa-Itoh K."/>
            <person name="Shimomura H."/>
            <person name="Yanagisawa S."/>
            <person name="Shimada S."/>
            <person name="Takahashi R."/>
            <person name="Oosaki M."/>
            <person name="Ogura T."/>
            <person name="Tsukihara T."/>
        </authorList>
    </citation>
    <scope>SUBUNIT</scope>
</reference>
<reference key="6">
    <citation type="journal article" date="2013" name="J. Am. Chem. Soc.">
        <title>Structural changes in cytochrome c oxidase induced by binding of sodium and calcium ions: an ATR-FTIR study.</title>
        <authorList>
            <person name="Marechal A."/>
            <person name="Iwaki M."/>
            <person name="Rich P.R."/>
        </authorList>
    </citation>
    <scope>METAL BINDING</scope>
</reference>
<reference key="7">
    <citation type="journal article" date="1996" name="Science">
        <title>The whole structure of the 13-subunit oxidized cytochrome c oxidase at 2.8 A.</title>
        <authorList>
            <person name="Tsukihara T."/>
            <person name="Aoyama H."/>
            <person name="Yamashita E."/>
            <person name="Tomizaki T."/>
            <person name="Yamaguchi H."/>
            <person name="Shinzawa-Itoh K."/>
            <person name="Nakashima R."/>
            <person name="Yaono R."/>
            <person name="Yoshikawa S."/>
        </authorList>
    </citation>
    <scope>X-RAY CRYSTALLOGRAPHY (2.8 ANGSTROMS)</scope>
</reference>
<reference key="8">
    <citation type="journal article" date="1999" name="Acta Crystallogr. D">
        <title>Structure analysis of bovine heart cytochrome c oxidase at 2.8 A resolution.</title>
        <authorList>
            <person name="Tomizaki T."/>
            <person name="Yamashita E."/>
            <person name="Yamaguchi H."/>
            <person name="Aoyama H."/>
            <person name="Tsukihara T."/>
            <person name="Shinzawa-Itoh K."/>
            <person name="Nakashima R."/>
            <person name="Yaono R."/>
            <person name="Yoshikawa S."/>
        </authorList>
    </citation>
    <scope>X-RAY CRYSTALLOGRAPHY (2.8 ANGSTROMS)</scope>
    <source>
        <tissue>Heart</tissue>
    </source>
</reference>
<reference key="9">
    <citation type="journal article" date="2000" name="Acta Crystallogr. D">
        <title>X-ray structure of azide-bound fully oxidized cytochrome c oxidase from bovine heart at 2.9 A resolution.</title>
        <authorList>
            <person name="Fei M.J."/>
            <person name="Yamashita E."/>
            <person name="Inoue N."/>
            <person name="Yao M."/>
            <person name="Yamaguchi H."/>
            <person name="Tsukihara T."/>
            <person name="Shinzawa-Itoh K."/>
            <person name="Nakashima R."/>
            <person name="Yoshikawa S."/>
        </authorList>
    </citation>
    <scope>X-RAY CRYSTALLOGRAPHY (2.9 ANGSTROMS)</scope>
    <source>
        <tissue>Heart</tissue>
    </source>
</reference>
<reference key="10">
    <citation type="journal article" date="2010" name="Proc. Natl. Acad. Sci. U.S.A.">
        <title>Bovine cytochrome c oxidase structures enable O2 reduction with minimization of reactive oxygens and provide a proton-pumping gate.</title>
        <authorList>
            <person name="Muramoto K."/>
            <person name="Ohta K."/>
            <person name="Shinzawa-Itoh K."/>
            <person name="Kanda K."/>
            <person name="Taniguchi M."/>
            <person name="Nabekura H."/>
            <person name="Yamashita E."/>
            <person name="Tsukihara T."/>
            <person name="Yoshikawa S."/>
        </authorList>
    </citation>
    <scope>X-RAY CRYSTALLOGRAPHY (1.80 ANGSTROMS)</scope>
</reference>
<reference key="11">
    <citation type="journal article" date="2016" name="Elife">
        <title>Functional asymmetry and electron flow in the bovine respirasome.</title>
        <authorList>
            <person name="Sousa J.S."/>
            <person name="Mills D.J."/>
            <person name="Vonck J."/>
            <person name="Kuehlbrandt W."/>
        </authorList>
    </citation>
    <scope>STRUCTURE BY ELECTRON MICROSCOPY (9.10 ANGSTROMS)</scope>
    <scope>SUBUNIT</scope>
</reference>
<reference key="12">
    <citation type="journal article" date="2016" name="J. Biol. Chem.">
        <title>The Mg2+-containing water cluster of mammalian cytochrome c oxidase collects four pumping proton equivalents in each catalytic cycle.</title>
        <authorList>
            <person name="Yano N."/>
            <person name="Muramoto K."/>
            <person name="Shimada A."/>
            <person name="Takemura S."/>
            <person name="Baba J."/>
            <person name="Fujisawa H."/>
            <person name="Mochizuki M."/>
            <person name="Shinzawa-Itoh K."/>
            <person name="Yamashita E."/>
            <person name="Tsukihara T."/>
            <person name="Yoshikawa S."/>
        </authorList>
    </citation>
    <scope>X-RAY CRYSTALLOGRAPHY (1.50 ANGSTROMS) IN COMPLEX WITH SODIUM</scope>
</reference>
<reference key="13">
    <citation type="journal article" date="2019" name="Proc. Natl. Acad. Sci. U.S.A.">
        <title>Monomeric structure of an active form of bovine cytochrome c oxidase.</title>
        <authorList>
            <person name="Shinzawa-Itoh K."/>
            <person name="Sugimura T."/>
            <person name="Misaki T."/>
            <person name="Tadehara Y."/>
            <person name="Yamamoto S."/>
            <person name="Hanada M."/>
            <person name="Yano N."/>
            <person name="Nakagawa T."/>
            <person name="Uene S."/>
            <person name="Yamada T."/>
            <person name="Aoyama H."/>
            <person name="Yamashita E."/>
            <person name="Tsukihara T."/>
            <person name="Yoshikawa S."/>
            <person name="Muramoto K."/>
        </authorList>
    </citation>
    <scope>X-RAY CRYSTALLOGRAPHY (1.85 ANGSTROMS)</scope>
</reference>
<name>COX1_BOVIN</name>